<keyword id="KW-0687">Ribonucleoprotein</keyword>
<keyword id="KW-0689">Ribosomal protein</keyword>
<keyword id="KW-0694">RNA-binding</keyword>
<keyword id="KW-0699">rRNA-binding</keyword>
<evidence type="ECO:0000255" key="1">
    <source>
        <dbReference type="HAMAP-Rule" id="MF_00503"/>
    </source>
</evidence>
<evidence type="ECO:0000305" key="2"/>
<feature type="chain" id="PRO_0000236490" description="Large ribosomal subunit protein bL9">
    <location>
        <begin position="1"/>
        <end position="151"/>
    </location>
</feature>
<reference key="1">
    <citation type="journal article" date="2003" name="Nat. Genet.">
        <title>Comparative analysis of the genome sequences of Bordetella pertussis, Bordetella parapertussis and Bordetella bronchiseptica.</title>
        <authorList>
            <person name="Parkhill J."/>
            <person name="Sebaihia M."/>
            <person name="Preston A."/>
            <person name="Murphy L.D."/>
            <person name="Thomson N.R."/>
            <person name="Harris D.E."/>
            <person name="Holden M.T.G."/>
            <person name="Churcher C.M."/>
            <person name="Bentley S.D."/>
            <person name="Mungall K.L."/>
            <person name="Cerdeno-Tarraga A.-M."/>
            <person name="Temple L."/>
            <person name="James K.D."/>
            <person name="Harris B."/>
            <person name="Quail M.A."/>
            <person name="Achtman M."/>
            <person name="Atkin R."/>
            <person name="Baker S."/>
            <person name="Basham D."/>
            <person name="Bason N."/>
            <person name="Cherevach I."/>
            <person name="Chillingworth T."/>
            <person name="Collins M."/>
            <person name="Cronin A."/>
            <person name="Davis P."/>
            <person name="Doggett J."/>
            <person name="Feltwell T."/>
            <person name="Goble A."/>
            <person name="Hamlin N."/>
            <person name="Hauser H."/>
            <person name="Holroyd S."/>
            <person name="Jagels K."/>
            <person name="Leather S."/>
            <person name="Moule S."/>
            <person name="Norberczak H."/>
            <person name="O'Neil S."/>
            <person name="Ormond D."/>
            <person name="Price C."/>
            <person name="Rabbinowitsch E."/>
            <person name="Rutter S."/>
            <person name="Sanders M."/>
            <person name="Saunders D."/>
            <person name="Seeger K."/>
            <person name="Sharp S."/>
            <person name="Simmonds M."/>
            <person name="Skelton J."/>
            <person name="Squares R."/>
            <person name="Squares S."/>
            <person name="Stevens K."/>
            <person name="Unwin L."/>
            <person name="Whitehead S."/>
            <person name="Barrell B.G."/>
            <person name="Maskell D.J."/>
        </authorList>
    </citation>
    <scope>NUCLEOTIDE SEQUENCE [LARGE SCALE GENOMIC DNA]</scope>
    <source>
        <strain>ATCC BAA-588 / NCTC 13252 / RB50</strain>
    </source>
</reference>
<protein>
    <recommendedName>
        <fullName evidence="1">Large ribosomal subunit protein bL9</fullName>
    </recommendedName>
    <alternativeName>
        <fullName evidence="2">50S ribosomal protein L9</fullName>
    </alternativeName>
</protein>
<organism>
    <name type="scientific">Bordetella bronchiseptica (strain ATCC BAA-588 / NCTC 13252 / RB50)</name>
    <name type="common">Alcaligenes bronchisepticus</name>
    <dbReference type="NCBI Taxonomy" id="257310"/>
    <lineage>
        <taxon>Bacteria</taxon>
        <taxon>Pseudomonadati</taxon>
        <taxon>Pseudomonadota</taxon>
        <taxon>Betaproteobacteria</taxon>
        <taxon>Burkholderiales</taxon>
        <taxon>Alcaligenaceae</taxon>
        <taxon>Bordetella</taxon>
    </lineage>
</organism>
<gene>
    <name evidence="1" type="primary">rplI</name>
    <name type="ordered locus">BB1917</name>
</gene>
<name>RL9_BORBR</name>
<dbReference type="EMBL" id="BX640442">
    <property type="protein sequence ID" value="CAE32414.1"/>
    <property type="molecule type" value="Genomic_DNA"/>
</dbReference>
<dbReference type="RefSeq" id="WP_003813092.1">
    <property type="nucleotide sequence ID" value="NC_002927.3"/>
</dbReference>
<dbReference type="SMR" id="Q7WL32"/>
<dbReference type="GeneID" id="93204253"/>
<dbReference type="KEGG" id="bbr:BB1917"/>
<dbReference type="eggNOG" id="COG0359">
    <property type="taxonomic scope" value="Bacteria"/>
</dbReference>
<dbReference type="HOGENOM" id="CLU_078938_4_1_4"/>
<dbReference type="Proteomes" id="UP000001027">
    <property type="component" value="Chromosome"/>
</dbReference>
<dbReference type="GO" id="GO:1990904">
    <property type="term" value="C:ribonucleoprotein complex"/>
    <property type="evidence" value="ECO:0007669"/>
    <property type="project" value="UniProtKB-KW"/>
</dbReference>
<dbReference type="GO" id="GO:0005840">
    <property type="term" value="C:ribosome"/>
    <property type="evidence" value="ECO:0007669"/>
    <property type="project" value="UniProtKB-KW"/>
</dbReference>
<dbReference type="GO" id="GO:0019843">
    <property type="term" value="F:rRNA binding"/>
    <property type="evidence" value="ECO:0007669"/>
    <property type="project" value="UniProtKB-UniRule"/>
</dbReference>
<dbReference type="GO" id="GO:0003735">
    <property type="term" value="F:structural constituent of ribosome"/>
    <property type="evidence" value="ECO:0007669"/>
    <property type="project" value="InterPro"/>
</dbReference>
<dbReference type="GO" id="GO:0006412">
    <property type="term" value="P:translation"/>
    <property type="evidence" value="ECO:0007669"/>
    <property type="project" value="UniProtKB-UniRule"/>
</dbReference>
<dbReference type="Gene3D" id="3.10.430.100">
    <property type="entry name" value="Ribosomal protein L9, C-terminal domain"/>
    <property type="match status" value="1"/>
</dbReference>
<dbReference type="Gene3D" id="3.40.5.10">
    <property type="entry name" value="Ribosomal protein L9, N-terminal domain"/>
    <property type="match status" value="1"/>
</dbReference>
<dbReference type="HAMAP" id="MF_00503">
    <property type="entry name" value="Ribosomal_bL9"/>
    <property type="match status" value="1"/>
</dbReference>
<dbReference type="InterPro" id="IPR000244">
    <property type="entry name" value="Ribosomal_bL9"/>
</dbReference>
<dbReference type="InterPro" id="IPR009027">
    <property type="entry name" value="Ribosomal_bL9/RNase_H1_N"/>
</dbReference>
<dbReference type="InterPro" id="IPR020594">
    <property type="entry name" value="Ribosomal_bL9_bac/chp"/>
</dbReference>
<dbReference type="InterPro" id="IPR020069">
    <property type="entry name" value="Ribosomal_bL9_C"/>
</dbReference>
<dbReference type="InterPro" id="IPR036791">
    <property type="entry name" value="Ribosomal_bL9_C_sf"/>
</dbReference>
<dbReference type="InterPro" id="IPR020070">
    <property type="entry name" value="Ribosomal_bL9_N"/>
</dbReference>
<dbReference type="InterPro" id="IPR036935">
    <property type="entry name" value="Ribosomal_bL9_N_sf"/>
</dbReference>
<dbReference type="NCBIfam" id="TIGR00158">
    <property type="entry name" value="L9"/>
    <property type="match status" value="1"/>
</dbReference>
<dbReference type="PANTHER" id="PTHR21368">
    <property type="entry name" value="50S RIBOSOMAL PROTEIN L9"/>
    <property type="match status" value="1"/>
</dbReference>
<dbReference type="Pfam" id="PF03948">
    <property type="entry name" value="Ribosomal_L9_C"/>
    <property type="match status" value="1"/>
</dbReference>
<dbReference type="Pfam" id="PF01281">
    <property type="entry name" value="Ribosomal_L9_N"/>
    <property type="match status" value="1"/>
</dbReference>
<dbReference type="SUPFAM" id="SSF55658">
    <property type="entry name" value="L9 N-domain-like"/>
    <property type="match status" value="1"/>
</dbReference>
<dbReference type="SUPFAM" id="SSF55653">
    <property type="entry name" value="Ribosomal protein L9 C-domain"/>
    <property type="match status" value="1"/>
</dbReference>
<dbReference type="PROSITE" id="PS00651">
    <property type="entry name" value="RIBOSOMAL_L9"/>
    <property type="match status" value="1"/>
</dbReference>
<accession>Q7WL32</accession>
<comment type="function">
    <text evidence="1">Binds to the 23S rRNA.</text>
</comment>
<comment type="similarity">
    <text evidence="1">Belongs to the bacterial ribosomal protein bL9 family.</text>
</comment>
<sequence length="151" mass="16367">MQIILLEKVANLGNLGEVVRVRDGYARNFLIPQKKARRATDAALKEFEARRAELEKVQAEKLAAAQALAERLNGFQLKISQKAGVDGRLFGSVTNADVAEGLRKAGFEAVEKSQVRMPNGQIKAVGEYPVQAVLHADVVADVVVLVEGEMA</sequence>
<proteinExistence type="inferred from homology"/>